<dbReference type="EC" id="6.5.1.1" evidence="1"/>
<dbReference type="EMBL" id="AY596297">
    <property type="protein sequence ID" value="AAV45492.1"/>
    <property type="molecule type" value="Genomic_DNA"/>
</dbReference>
<dbReference type="RefSeq" id="WP_011223037.1">
    <property type="nucleotide sequence ID" value="NC_006396.1"/>
</dbReference>
<dbReference type="SMR" id="Q5V4R0"/>
<dbReference type="STRING" id="272569.rrnAC0463"/>
<dbReference type="PaxDb" id="272569-rrnAC0463"/>
<dbReference type="EnsemblBacteria" id="AAV45492">
    <property type="protein sequence ID" value="AAV45492"/>
    <property type="gene ID" value="rrnAC0463"/>
</dbReference>
<dbReference type="GeneID" id="40151532"/>
<dbReference type="KEGG" id="hma:rrnAC0463"/>
<dbReference type="PATRIC" id="fig|272569.17.peg.1235"/>
<dbReference type="eggNOG" id="arCOG01347">
    <property type="taxonomic scope" value="Archaea"/>
</dbReference>
<dbReference type="HOGENOM" id="CLU_005138_6_0_2"/>
<dbReference type="Proteomes" id="UP000001169">
    <property type="component" value="Chromosome I"/>
</dbReference>
<dbReference type="GO" id="GO:0005524">
    <property type="term" value="F:ATP binding"/>
    <property type="evidence" value="ECO:0007669"/>
    <property type="project" value="UniProtKB-UniRule"/>
</dbReference>
<dbReference type="GO" id="GO:0003677">
    <property type="term" value="F:DNA binding"/>
    <property type="evidence" value="ECO:0007669"/>
    <property type="project" value="InterPro"/>
</dbReference>
<dbReference type="GO" id="GO:0003910">
    <property type="term" value="F:DNA ligase (ATP) activity"/>
    <property type="evidence" value="ECO:0007669"/>
    <property type="project" value="UniProtKB-UniRule"/>
</dbReference>
<dbReference type="GO" id="GO:0046872">
    <property type="term" value="F:metal ion binding"/>
    <property type="evidence" value="ECO:0007669"/>
    <property type="project" value="UniProtKB-KW"/>
</dbReference>
<dbReference type="GO" id="GO:0051301">
    <property type="term" value="P:cell division"/>
    <property type="evidence" value="ECO:0007669"/>
    <property type="project" value="UniProtKB-KW"/>
</dbReference>
<dbReference type="GO" id="GO:0071897">
    <property type="term" value="P:DNA biosynthetic process"/>
    <property type="evidence" value="ECO:0007669"/>
    <property type="project" value="InterPro"/>
</dbReference>
<dbReference type="GO" id="GO:0006310">
    <property type="term" value="P:DNA recombination"/>
    <property type="evidence" value="ECO:0007669"/>
    <property type="project" value="UniProtKB-UniRule"/>
</dbReference>
<dbReference type="GO" id="GO:0006281">
    <property type="term" value="P:DNA repair"/>
    <property type="evidence" value="ECO:0007669"/>
    <property type="project" value="UniProtKB-UniRule"/>
</dbReference>
<dbReference type="GO" id="GO:0006273">
    <property type="term" value="P:lagging strand elongation"/>
    <property type="evidence" value="ECO:0007669"/>
    <property type="project" value="TreeGrafter"/>
</dbReference>
<dbReference type="CDD" id="cd07901">
    <property type="entry name" value="Adenylation_DNA_ligase_Arch_LigB"/>
    <property type="match status" value="1"/>
</dbReference>
<dbReference type="CDD" id="cd07972">
    <property type="entry name" value="OBF_DNA_ligase_Arch_LigB"/>
    <property type="match status" value="1"/>
</dbReference>
<dbReference type="FunFam" id="1.10.3260.10:FF:000007">
    <property type="entry name" value="DNA ligase"/>
    <property type="match status" value="1"/>
</dbReference>
<dbReference type="Gene3D" id="1.10.3260.10">
    <property type="entry name" value="DNA ligase, ATP-dependent, N-terminal domain"/>
    <property type="match status" value="1"/>
</dbReference>
<dbReference type="Gene3D" id="3.30.470.30">
    <property type="entry name" value="DNA ligase/mRNA capping enzyme"/>
    <property type="match status" value="1"/>
</dbReference>
<dbReference type="Gene3D" id="2.40.50.140">
    <property type="entry name" value="Nucleic acid-binding proteins"/>
    <property type="match status" value="1"/>
</dbReference>
<dbReference type="HAMAP" id="MF_00407">
    <property type="entry name" value="DNA_ligase"/>
    <property type="match status" value="1"/>
</dbReference>
<dbReference type="InterPro" id="IPR050191">
    <property type="entry name" value="ATP-dep_DNA_ligase"/>
</dbReference>
<dbReference type="InterPro" id="IPR022865">
    <property type="entry name" value="DNA_ligae_ATP-dep_bac/arc"/>
</dbReference>
<dbReference type="InterPro" id="IPR000977">
    <property type="entry name" value="DNA_ligase_ATP-dep"/>
</dbReference>
<dbReference type="InterPro" id="IPR012309">
    <property type="entry name" value="DNA_ligase_ATP-dep_C"/>
</dbReference>
<dbReference type="InterPro" id="IPR012310">
    <property type="entry name" value="DNA_ligase_ATP-dep_cent"/>
</dbReference>
<dbReference type="InterPro" id="IPR016059">
    <property type="entry name" value="DNA_ligase_ATP-dep_CS"/>
</dbReference>
<dbReference type="InterPro" id="IPR012308">
    <property type="entry name" value="DNA_ligase_ATP-dep_N"/>
</dbReference>
<dbReference type="InterPro" id="IPR036599">
    <property type="entry name" value="DNA_ligase_N_sf"/>
</dbReference>
<dbReference type="InterPro" id="IPR054890">
    <property type="entry name" value="LigA_Halo"/>
</dbReference>
<dbReference type="InterPro" id="IPR012340">
    <property type="entry name" value="NA-bd_OB-fold"/>
</dbReference>
<dbReference type="NCBIfam" id="TIGR00574">
    <property type="entry name" value="dnl1"/>
    <property type="match status" value="1"/>
</dbReference>
<dbReference type="NCBIfam" id="NF041331">
    <property type="entry name" value="LigA_Halo"/>
    <property type="match status" value="1"/>
</dbReference>
<dbReference type="PANTHER" id="PTHR45674:SF7">
    <property type="entry name" value="DNA LIGASE"/>
    <property type="match status" value="1"/>
</dbReference>
<dbReference type="PANTHER" id="PTHR45674">
    <property type="entry name" value="DNA LIGASE 1/3 FAMILY MEMBER"/>
    <property type="match status" value="1"/>
</dbReference>
<dbReference type="Pfam" id="PF04679">
    <property type="entry name" value="DNA_ligase_A_C"/>
    <property type="match status" value="1"/>
</dbReference>
<dbReference type="Pfam" id="PF01068">
    <property type="entry name" value="DNA_ligase_A_M"/>
    <property type="match status" value="1"/>
</dbReference>
<dbReference type="Pfam" id="PF04675">
    <property type="entry name" value="DNA_ligase_A_N"/>
    <property type="match status" value="1"/>
</dbReference>
<dbReference type="SUPFAM" id="SSF117018">
    <property type="entry name" value="ATP-dependent DNA ligase DNA-binding domain"/>
    <property type="match status" value="1"/>
</dbReference>
<dbReference type="SUPFAM" id="SSF56091">
    <property type="entry name" value="DNA ligase/mRNA capping enzyme, catalytic domain"/>
    <property type="match status" value="1"/>
</dbReference>
<dbReference type="SUPFAM" id="SSF50249">
    <property type="entry name" value="Nucleic acid-binding proteins"/>
    <property type="match status" value="1"/>
</dbReference>
<dbReference type="PROSITE" id="PS00697">
    <property type="entry name" value="DNA_LIGASE_A1"/>
    <property type="match status" value="1"/>
</dbReference>
<dbReference type="PROSITE" id="PS50160">
    <property type="entry name" value="DNA_LIGASE_A3"/>
    <property type="match status" value="1"/>
</dbReference>
<organism>
    <name type="scientific">Haloarcula marismortui (strain ATCC 43049 / DSM 3752 / JCM 8966 / VKM B-1809)</name>
    <name type="common">Halobacterium marismortui</name>
    <dbReference type="NCBI Taxonomy" id="272569"/>
    <lineage>
        <taxon>Archaea</taxon>
        <taxon>Methanobacteriati</taxon>
        <taxon>Methanobacteriota</taxon>
        <taxon>Stenosarchaea group</taxon>
        <taxon>Halobacteria</taxon>
        <taxon>Halobacteriales</taxon>
        <taxon>Haloarculaceae</taxon>
        <taxon>Haloarcula</taxon>
    </lineage>
</organism>
<accession>Q5V4R0</accession>
<name>DNLI_HALMA</name>
<gene>
    <name evidence="1" type="primary">lig</name>
    <name type="ordered locus">rrnAC0463</name>
</gene>
<protein>
    <recommendedName>
        <fullName evidence="1">DNA ligase</fullName>
        <ecNumber evidence="1">6.5.1.1</ecNumber>
    </recommendedName>
    <alternativeName>
        <fullName evidence="1">Polydeoxyribonucleotide synthase [ATP]</fullName>
    </alternativeName>
</protein>
<proteinExistence type="inferred from homology"/>
<sequence length="554" mass="59594">MEFAAFADRAEAIESESADTAITEAVTDLFRASGSDLSTLARFVQGRVFPAYESRTLDIGPRLCYEAIARAAGQNVSADDVEQRLADLGEIGAVAASYDLGGQQGLAAFGAGGGGDDALTVAELDDELRNLAAVDGSGSQGTKVDILFGLFSRCSSTEAGYLARLVLSEMRIGVGEGTVRDAAAAAFDVPVEAVERAVQVSNDYGMVAEVARDEGESGLATVTLEIGRPVQAMLAQAGTVAGALEDWDRAAVEWKYDGARVQVHFDGEDARLFSRNMEEVTDPLPEVVETVESTLDAPAILDGEVVAVDDGGDPLPFQEVLRRFRRKHDVAAAREDVAVRLHAFDCLHAAGEDLLDAALETRHDRLESLFPADSDVFSQMWLSDDAEEIESLEAEALAAGQEGIMLKDPTAAYSPGKRGKHWRKRKPDVETLDCVVTGAEWGEGRRANVLGSFELSVRTDDGYATVGNVATGITDEELDDLTERFEPYIRSEDGRDVVLDPAVVFEVGYEEIQASQSYASGYALRFPRFLSVREDKTPDSADSLARVERLAESQ</sequence>
<feature type="chain" id="PRO_1000049866" description="DNA ligase">
    <location>
        <begin position="1"/>
        <end position="554"/>
    </location>
</feature>
<feature type="active site" description="N6-AMP-lysine intermediate" evidence="1">
    <location>
        <position position="255"/>
    </location>
</feature>
<feature type="binding site" evidence="1">
    <location>
        <position position="253"/>
    </location>
    <ligand>
        <name>ATP</name>
        <dbReference type="ChEBI" id="CHEBI:30616"/>
    </ligand>
</feature>
<feature type="binding site" evidence="1">
    <location>
        <position position="260"/>
    </location>
    <ligand>
        <name>ATP</name>
        <dbReference type="ChEBI" id="CHEBI:30616"/>
    </ligand>
</feature>
<feature type="binding site" evidence="1">
    <location>
        <position position="275"/>
    </location>
    <ligand>
        <name>ATP</name>
        <dbReference type="ChEBI" id="CHEBI:30616"/>
    </ligand>
</feature>
<feature type="binding site" evidence="1">
    <location>
        <position position="304"/>
    </location>
    <ligand>
        <name>ATP</name>
        <dbReference type="ChEBI" id="CHEBI:30616"/>
    </ligand>
</feature>
<feature type="binding site" evidence="1">
    <location>
        <position position="344"/>
    </location>
    <ligand>
        <name>ATP</name>
        <dbReference type="ChEBI" id="CHEBI:30616"/>
    </ligand>
</feature>
<feature type="binding site" evidence="1">
    <location>
        <position position="418"/>
    </location>
    <ligand>
        <name>ATP</name>
        <dbReference type="ChEBI" id="CHEBI:30616"/>
    </ligand>
</feature>
<feature type="binding site" evidence="1">
    <location>
        <position position="424"/>
    </location>
    <ligand>
        <name>ATP</name>
        <dbReference type="ChEBI" id="CHEBI:30616"/>
    </ligand>
</feature>
<reference key="1">
    <citation type="journal article" date="2004" name="Genome Res.">
        <title>Genome sequence of Haloarcula marismortui: a halophilic archaeon from the Dead Sea.</title>
        <authorList>
            <person name="Baliga N.S."/>
            <person name="Bonneau R."/>
            <person name="Facciotti M.T."/>
            <person name="Pan M."/>
            <person name="Glusman G."/>
            <person name="Deutsch E.W."/>
            <person name="Shannon P."/>
            <person name="Chiu Y."/>
            <person name="Weng R.S."/>
            <person name="Gan R.R."/>
            <person name="Hung P."/>
            <person name="Date S.V."/>
            <person name="Marcotte E."/>
            <person name="Hood L."/>
            <person name="Ng W.V."/>
        </authorList>
    </citation>
    <scope>NUCLEOTIDE SEQUENCE [LARGE SCALE GENOMIC DNA]</scope>
    <source>
        <strain>ATCC 43049 / DSM 3752 / JCM 8966 / VKM B-1809</strain>
    </source>
</reference>
<keyword id="KW-0067">ATP-binding</keyword>
<keyword id="KW-0131">Cell cycle</keyword>
<keyword id="KW-0132">Cell division</keyword>
<keyword id="KW-0227">DNA damage</keyword>
<keyword id="KW-0233">DNA recombination</keyword>
<keyword id="KW-0234">DNA repair</keyword>
<keyword id="KW-0235">DNA replication</keyword>
<keyword id="KW-0436">Ligase</keyword>
<keyword id="KW-0460">Magnesium</keyword>
<keyword id="KW-0479">Metal-binding</keyword>
<keyword id="KW-0547">Nucleotide-binding</keyword>
<keyword id="KW-1185">Reference proteome</keyword>
<evidence type="ECO:0000255" key="1">
    <source>
        <dbReference type="HAMAP-Rule" id="MF_00407"/>
    </source>
</evidence>
<comment type="function">
    <text evidence="1">DNA ligase that seals nicks in double-stranded DNA during DNA replication, DNA recombination and DNA repair.</text>
</comment>
<comment type="catalytic activity">
    <reaction evidence="1">
        <text>ATP + (deoxyribonucleotide)n-3'-hydroxyl + 5'-phospho-(deoxyribonucleotide)m = (deoxyribonucleotide)n+m + AMP + diphosphate.</text>
        <dbReference type="EC" id="6.5.1.1"/>
    </reaction>
</comment>
<comment type="cofactor">
    <cofactor evidence="1">
        <name>Mg(2+)</name>
        <dbReference type="ChEBI" id="CHEBI:18420"/>
    </cofactor>
</comment>
<comment type="similarity">
    <text evidence="1">Belongs to the ATP-dependent DNA ligase family.</text>
</comment>